<name>YGFZ_SALCH</name>
<proteinExistence type="inferred from homology"/>
<organism>
    <name type="scientific">Salmonella choleraesuis (strain SC-B67)</name>
    <dbReference type="NCBI Taxonomy" id="321314"/>
    <lineage>
        <taxon>Bacteria</taxon>
        <taxon>Pseudomonadati</taxon>
        <taxon>Pseudomonadota</taxon>
        <taxon>Gammaproteobacteria</taxon>
        <taxon>Enterobacterales</taxon>
        <taxon>Enterobacteriaceae</taxon>
        <taxon>Salmonella</taxon>
    </lineage>
</organism>
<keyword id="KW-0963">Cytoplasm</keyword>
<keyword id="KW-0290">Folate-binding</keyword>
<keyword id="KW-0819">tRNA processing</keyword>
<feature type="chain" id="PRO_0000262895" description="tRNA-modifying protein YgfZ">
    <location>
        <begin position="1"/>
        <end position="326"/>
    </location>
</feature>
<feature type="binding site" evidence="1">
    <location>
        <position position="27"/>
    </location>
    <ligand>
        <name>folate</name>
        <dbReference type="ChEBI" id="CHEBI:62501"/>
    </ligand>
</feature>
<feature type="binding site" evidence="1">
    <location>
        <position position="189"/>
    </location>
    <ligand>
        <name>folate</name>
        <dbReference type="ChEBI" id="CHEBI:62501"/>
    </ligand>
</feature>
<protein>
    <recommendedName>
        <fullName evidence="1">tRNA-modifying protein YgfZ</fullName>
    </recommendedName>
</protein>
<accession>Q57K67</accession>
<evidence type="ECO:0000255" key="1">
    <source>
        <dbReference type="HAMAP-Rule" id="MF_01175"/>
    </source>
</evidence>
<sequence length="326" mass="35914">MAFISFPPRHPSSSARLPLTLIALDDWALSTITGVDSEKYIQGQVTADVSQMTEQQHLLAAHCDAKGKMWSTLRLFRERDGFAWIERRSVLEAQLTELKKYAVFSKVVIAPDDERVLLGVAGFQARAALANVFSVLPNSENQVVRDGASTLLWFEHPAERFLLVTDVATANMLTEKLHGEAELNNSQQWLALDIEAGIPAIDAANSGQFIPQATNLQALGGISFKKGCYTGQEMVARAKFRGANKRALWLLAGKASRVPEAGEDLELQMGENWRRTGAILAATQLDDGQLLVQAVMNNDLEAESVFRVRDDANTLHIVPLPYSLEE</sequence>
<reference key="1">
    <citation type="journal article" date="2005" name="Nucleic Acids Res.">
        <title>The genome sequence of Salmonella enterica serovar Choleraesuis, a highly invasive and resistant zoonotic pathogen.</title>
        <authorList>
            <person name="Chiu C.-H."/>
            <person name="Tang P."/>
            <person name="Chu C."/>
            <person name="Hu S."/>
            <person name="Bao Q."/>
            <person name="Yu J."/>
            <person name="Chou Y.-Y."/>
            <person name="Wang H.-S."/>
            <person name="Lee Y.-S."/>
        </authorList>
    </citation>
    <scope>NUCLEOTIDE SEQUENCE [LARGE SCALE GENOMIC DNA]</scope>
    <source>
        <strain>SC-B67</strain>
    </source>
</reference>
<gene>
    <name evidence="1" type="primary">ygfZ</name>
    <name type="ordered locus">SCH_2989</name>
</gene>
<comment type="function">
    <text evidence="1">Folate-binding protein involved in regulating the level of ATP-DnaA and in the modification of some tRNAs. It is probably a key factor in regulatory networks that act via tRNA modification, such as initiation of chromosomal replication.</text>
</comment>
<comment type="subcellular location">
    <subcellularLocation>
        <location evidence="1">Cytoplasm</location>
    </subcellularLocation>
</comment>
<comment type="similarity">
    <text evidence="1">Belongs to the tRNA-modifying YgfZ family.</text>
</comment>
<dbReference type="EMBL" id="AE017220">
    <property type="protein sequence ID" value="AAX66895.1"/>
    <property type="molecule type" value="Genomic_DNA"/>
</dbReference>
<dbReference type="RefSeq" id="WP_000874173.1">
    <property type="nucleotide sequence ID" value="NC_006905.1"/>
</dbReference>
<dbReference type="SMR" id="Q57K67"/>
<dbReference type="KEGG" id="sec:SCH_2989"/>
<dbReference type="HOGENOM" id="CLU_007884_6_1_6"/>
<dbReference type="Proteomes" id="UP000000538">
    <property type="component" value="Chromosome"/>
</dbReference>
<dbReference type="GO" id="GO:0005737">
    <property type="term" value="C:cytoplasm"/>
    <property type="evidence" value="ECO:0007669"/>
    <property type="project" value="UniProtKB-SubCell"/>
</dbReference>
<dbReference type="GO" id="GO:0005542">
    <property type="term" value="F:folic acid binding"/>
    <property type="evidence" value="ECO:0007669"/>
    <property type="project" value="UniProtKB-UniRule"/>
</dbReference>
<dbReference type="GO" id="GO:0016226">
    <property type="term" value="P:iron-sulfur cluster assembly"/>
    <property type="evidence" value="ECO:0007669"/>
    <property type="project" value="TreeGrafter"/>
</dbReference>
<dbReference type="GO" id="GO:0009451">
    <property type="term" value="P:RNA modification"/>
    <property type="evidence" value="ECO:0007669"/>
    <property type="project" value="InterPro"/>
</dbReference>
<dbReference type="GO" id="GO:0008033">
    <property type="term" value="P:tRNA processing"/>
    <property type="evidence" value="ECO:0007669"/>
    <property type="project" value="UniProtKB-UniRule"/>
</dbReference>
<dbReference type="FunFam" id="2.40.30.160:FF:000001">
    <property type="entry name" value="tRNA-modifying protein YgfZ"/>
    <property type="match status" value="1"/>
</dbReference>
<dbReference type="FunFam" id="3.30.70.1400:FF:000002">
    <property type="entry name" value="tRNA-modifying protein YgfZ"/>
    <property type="match status" value="1"/>
</dbReference>
<dbReference type="FunFam" id="3.30.70.1630:FF:000001">
    <property type="entry name" value="tRNA-modifying protein YgfZ"/>
    <property type="match status" value="1"/>
</dbReference>
<dbReference type="Gene3D" id="2.40.30.160">
    <property type="match status" value="1"/>
</dbReference>
<dbReference type="Gene3D" id="3.30.70.1630">
    <property type="match status" value="1"/>
</dbReference>
<dbReference type="Gene3D" id="3.30.70.1400">
    <property type="entry name" value="Aminomethyltransferase beta-barrel domains"/>
    <property type="match status" value="1"/>
</dbReference>
<dbReference type="HAMAP" id="MF_01175">
    <property type="entry name" value="tRNA_modifying_YgfZ"/>
    <property type="match status" value="1"/>
</dbReference>
<dbReference type="InterPro" id="IPR029043">
    <property type="entry name" value="GcvT/YgfZ_C"/>
</dbReference>
<dbReference type="InterPro" id="IPR023758">
    <property type="entry name" value="tRNA-modifying_YgfZ"/>
</dbReference>
<dbReference type="InterPro" id="IPR045179">
    <property type="entry name" value="YgfZ/GcvT"/>
</dbReference>
<dbReference type="InterPro" id="IPR017703">
    <property type="entry name" value="YgfZ/GcvT_CS"/>
</dbReference>
<dbReference type="InterPro" id="IPR048451">
    <property type="entry name" value="YgfZ_barrel"/>
</dbReference>
<dbReference type="NCBIfam" id="NF007110">
    <property type="entry name" value="PRK09559.1"/>
    <property type="match status" value="1"/>
</dbReference>
<dbReference type="NCBIfam" id="TIGR03317">
    <property type="entry name" value="ygfZ_signature"/>
    <property type="match status" value="1"/>
</dbReference>
<dbReference type="PANTHER" id="PTHR22602">
    <property type="entry name" value="TRANSFERASE CAF17, MITOCHONDRIAL-RELATED"/>
    <property type="match status" value="1"/>
</dbReference>
<dbReference type="PANTHER" id="PTHR22602:SF0">
    <property type="entry name" value="TRANSFERASE CAF17, MITOCHONDRIAL-RELATED"/>
    <property type="match status" value="1"/>
</dbReference>
<dbReference type="Pfam" id="PF21130">
    <property type="entry name" value="YgfZ_barrel"/>
    <property type="match status" value="1"/>
</dbReference>
<dbReference type="SUPFAM" id="SSF101790">
    <property type="entry name" value="Aminomethyltransferase beta-barrel domain"/>
    <property type="match status" value="1"/>
</dbReference>
<dbReference type="SUPFAM" id="SSF103025">
    <property type="entry name" value="Folate-binding domain"/>
    <property type="match status" value="1"/>
</dbReference>